<accession>A8EWD7</accession>
<gene>
    <name evidence="2" type="primary">infB</name>
    <name type="ordered locus">Abu_2043</name>
</gene>
<evidence type="ECO:0000250" key="1"/>
<evidence type="ECO:0000255" key="2">
    <source>
        <dbReference type="HAMAP-Rule" id="MF_00100"/>
    </source>
</evidence>
<evidence type="ECO:0000256" key="3">
    <source>
        <dbReference type="SAM" id="MobiDB-lite"/>
    </source>
</evidence>
<name>IF2_ALIB4</name>
<comment type="function">
    <text evidence="2">One of the essential components for the initiation of protein synthesis. Protects formylmethionyl-tRNA from spontaneous hydrolysis and promotes its binding to the 30S ribosomal subunits. Also involved in the hydrolysis of GTP during the formation of the 70S ribosomal complex.</text>
</comment>
<comment type="subcellular location">
    <subcellularLocation>
        <location evidence="2">Cytoplasm</location>
    </subcellularLocation>
</comment>
<comment type="similarity">
    <text evidence="2">Belongs to the TRAFAC class translation factor GTPase superfamily. Classic translation factor GTPase family. IF-2 subfamily.</text>
</comment>
<protein>
    <recommendedName>
        <fullName evidence="2">Translation initiation factor IF-2</fullName>
    </recommendedName>
</protein>
<proteinExistence type="inferred from homology"/>
<sequence>MSDTVRVYEIAEEAGASSQDVIAKAKDLGIELKSPQTAVSYEDAEEITKYMMTGKSERLATKPAKVKKVVKKEEVKKETEEIETPKEKIETVQKVEKEIIKKPELKKVEISKPISKAPQKSEEESENLENPNKIVPKRKGLVIIKKKRPKEEELEEQQTITENQSKKQMKSLSEILGGVDDEEKSYNEPKNKENDDIKKQKVKKEKKKPLIKTQDHGKKLDVDREYSDEFASSDDSLLGEEIVLLDMDLSDSYKIFDEPKPQNIVNQSRSSKPAAFGNVPQGLKRGKRKKRIVRTQEKAEITSVTIPEDIRVYEFAEACGKSPAEVITVLFSLGMMVTKNDFLKQDELEILGEEFGIEVTVKDALEDVNYVETYNDEEDIDTSSFVTRPPVVTIMGHVDHGKTSLLDKIRSSKVAAGEAGGITQHITSYTVTKNGQEITFVDTPGHAAFSAMRARGANVTDIIIIVVAADDGVKMQTEEVISHAKASGCPIIVAMNKMDKETANPDMVKAQMAEKGLTPIDWGGDIEFIGVSARTGDGIEDLLENILLQAEILELKADPTAKAKATVIEASLEKGRGPVANVIVQNGTLKIGDNIVCDTTFGRVKAITDDNGKPVKELGLSQTGTVLGLNEVPTTGSVLVAMDTEKEVREIATTRAEHARAKELSKSTKVSLEEMSGLIAEGKIKQLPVIIKADVGGSLEAIKGSLEKIANDEVKVKVVHAAVGGITESDLVLAGASGECIILGFNVRPTGSVKAKAKADGVTINTYSIIYDLIDDVKHALSGMMSAVIREENTGQAEVRDTFVVPKVGTVAGCLVTDGKVIRGGHARIIRDGVVTYTGKISSLKRFKDDVKEVANGYECGIMFDKFNDIKVGDFIETFIQIEEKVSVDD</sequence>
<dbReference type="EMBL" id="CP000361">
    <property type="protein sequence ID" value="ABV68260.1"/>
    <property type="molecule type" value="Genomic_DNA"/>
</dbReference>
<dbReference type="RefSeq" id="WP_012147925.1">
    <property type="nucleotide sequence ID" value="NC_009850.1"/>
</dbReference>
<dbReference type="SMR" id="A8EWD7"/>
<dbReference type="STRING" id="367737.Abu_2043"/>
<dbReference type="GeneID" id="24303366"/>
<dbReference type="KEGG" id="abu:Abu_2043"/>
<dbReference type="eggNOG" id="COG0532">
    <property type="taxonomic scope" value="Bacteria"/>
</dbReference>
<dbReference type="HOGENOM" id="CLU_006301_4_1_7"/>
<dbReference type="Proteomes" id="UP000001136">
    <property type="component" value="Chromosome"/>
</dbReference>
<dbReference type="GO" id="GO:0005829">
    <property type="term" value="C:cytosol"/>
    <property type="evidence" value="ECO:0007669"/>
    <property type="project" value="TreeGrafter"/>
</dbReference>
<dbReference type="GO" id="GO:0005525">
    <property type="term" value="F:GTP binding"/>
    <property type="evidence" value="ECO:0007669"/>
    <property type="project" value="UniProtKB-KW"/>
</dbReference>
<dbReference type="GO" id="GO:0003924">
    <property type="term" value="F:GTPase activity"/>
    <property type="evidence" value="ECO:0007669"/>
    <property type="project" value="UniProtKB-UniRule"/>
</dbReference>
<dbReference type="GO" id="GO:0003743">
    <property type="term" value="F:translation initiation factor activity"/>
    <property type="evidence" value="ECO:0007669"/>
    <property type="project" value="UniProtKB-UniRule"/>
</dbReference>
<dbReference type="CDD" id="cd01887">
    <property type="entry name" value="IF2_eIF5B"/>
    <property type="match status" value="1"/>
</dbReference>
<dbReference type="CDD" id="cd03702">
    <property type="entry name" value="IF2_mtIF2_II"/>
    <property type="match status" value="1"/>
</dbReference>
<dbReference type="CDD" id="cd03692">
    <property type="entry name" value="mtIF2_IVc"/>
    <property type="match status" value="1"/>
</dbReference>
<dbReference type="FunFam" id="2.40.30.10:FF:000008">
    <property type="entry name" value="Translation initiation factor IF-2"/>
    <property type="match status" value="1"/>
</dbReference>
<dbReference type="FunFam" id="2.40.30.10:FF:000054">
    <property type="entry name" value="Translation initiation factor IF-2"/>
    <property type="match status" value="1"/>
</dbReference>
<dbReference type="FunFam" id="3.40.50.10050:FF:000001">
    <property type="entry name" value="Translation initiation factor IF-2"/>
    <property type="match status" value="1"/>
</dbReference>
<dbReference type="FunFam" id="3.40.50.300:FF:000019">
    <property type="entry name" value="Translation initiation factor IF-2"/>
    <property type="match status" value="1"/>
</dbReference>
<dbReference type="Gene3D" id="1.10.10.2480">
    <property type="match status" value="1"/>
</dbReference>
<dbReference type="Gene3D" id="3.40.50.300">
    <property type="entry name" value="P-loop containing nucleotide triphosphate hydrolases"/>
    <property type="match status" value="1"/>
</dbReference>
<dbReference type="Gene3D" id="2.40.30.10">
    <property type="entry name" value="Translation factors"/>
    <property type="match status" value="2"/>
</dbReference>
<dbReference type="Gene3D" id="3.40.50.10050">
    <property type="entry name" value="Translation initiation factor IF- 2, domain 3"/>
    <property type="match status" value="1"/>
</dbReference>
<dbReference type="HAMAP" id="MF_00100_B">
    <property type="entry name" value="IF_2_B"/>
    <property type="match status" value="1"/>
</dbReference>
<dbReference type="InterPro" id="IPR053905">
    <property type="entry name" value="EF-G-like_DII"/>
</dbReference>
<dbReference type="InterPro" id="IPR044145">
    <property type="entry name" value="IF2_II"/>
</dbReference>
<dbReference type="InterPro" id="IPR006847">
    <property type="entry name" value="IF2_N"/>
</dbReference>
<dbReference type="InterPro" id="IPR027417">
    <property type="entry name" value="P-loop_NTPase"/>
</dbReference>
<dbReference type="InterPro" id="IPR005225">
    <property type="entry name" value="Small_GTP-bd"/>
</dbReference>
<dbReference type="InterPro" id="IPR000795">
    <property type="entry name" value="T_Tr_GTP-bd_dom"/>
</dbReference>
<dbReference type="InterPro" id="IPR000178">
    <property type="entry name" value="TF_IF2_bacterial-like"/>
</dbReference>
<dbReference type="InterPro" id="IPR015760">
    <property type="entry name" value="TIF_IF2"/>
</dbReference>
<dbReference type="InterPro" id="IPR023115">
    <property type="entry name" value="TIF_IF2_dom3"/>
</dbReference>
<dbReference type="InterPro" id="IPR036925">
    <property type="entry name" value="TIF_IF2_dom3_sf"/>
</dbReference>
<dbReference type="InterPro" id="IPR009000">
    <property type="entry name" value="Transl_B-barrel_sf"/>
</dbReference>
<dbReference type="NCBIfam" id="TIGR00487">
    <property type="entry name" value="IF-2"/>
    <property type="match status" value="1"/>
</dbReference>
<dbReference type="NCBIfam" id="TIGR00231">
    <property type="entry name" value="small_GTP"/>
    <property type="match status" value="1"/>
</dbReference>
<dbReference type="PANTHER" id="PTHR43381:SF5">
    <property type="entry name" value="TR-TYPE G DOMAIN-CONTAINING PROTEIN"/>
    <property type="match status" value="1"/>
</dbReference>
<dbReference type="PANTHER" id="PTHR43381">
    <property type="entry name" value="TRANSLATION INITIATION FACTOR IF-2-RELATED"/>
    <property type="match status" value="1"/>
</dbReference>
<dbReference type="Pfam" id="PF22042">
    <property type="entry name" value="EF-G_D2"/>
    <property type="match status" value="1"/>
</dbReference>
<dbReference type="Pfam" id="PF00009">
    <property type="entry name" value="GTP_EFTU"/>
    <property type="match status" value="1"/>
</dbReference>
<dbReference type="Pfam" id="PF11987">
    <property type="entry name" value="IF-2"/>
    <property type="match status" value="1"/>
</dbReference>
<dbReference type="Pfam" id="PF04760">
    <property type="entry name" value="IF2_N"/>
    <property type="match status" value="2"/>
</dbReference>
<dbReference type="SUPFAM" id="SSF52156">
    <property type="entry name" value="Initiation factor IF2/eIF5b, domain 3"/>
    <property type="match status" value="1"/>
</dbReference>
<dbReference type="SUPFAM" id="SSF52540">
    <property type="entry name" value="P-loop containing nucleoside triphosphate hydrolases"/>
    <property type="match status" value="1"/>
</dbReference>
<dbReference type="SUPFAM" id="SSF50447">
    <property type="entry name" value="Translation proteins"/>
    <property type="match status" value="2"/>
</dbReference>
<dbReference type="PROSITE" id="PS51722">
    <property type="entry name" value="G_TR_2"/>
    <property type="match status" value="1"/>
</dbReference>
<dbReference type="PROSITE" id="PS01176">
    <property type="entry name" value="IF2"/>
    <property type="match status" value="1"/>
</dbReference>
<feature type="chain" id="PRO_0000335455" description="Translation initiation factor IF-2">
    <location>
        <begin position="1"/>
        <end position="890"/>
    </location>
</feature>
<feature type="domain" description="tr-type G">
    <location>
        <begin position="387"/>
        <end position="554"/>
    </location>
</feature>
<feature type="region of interest" description="Disordered" evidence="3">
    <location>
        <begin position="110"/>
        <end position="216"/>
    </location>
</feature>
<feature type="region of interest" description="G1" evidence="1">
    <location>
        <begin position="396"/>
        <end position="403"/>
    </location>
</feature>
<feature type="region of interest" description="G2" evidence="1">
    <location>
        <begin position="421"/>
        <end position="425"/>
    </location>
</feature>
<feature type="region of interest" description="G3" evidence="1">
    <location>
        <begin position="442"/>
        <end position="445"/>
    </location>
</feature>
<feature type="region of interest" description="G4" evidence="1">
    <location>
        <begin position="496"/>
        <end position="499"/>
    </location>
</feature>
<feature type="region of interest" description="G5" evidence="1">
    <location>
        <begin position="532"/>
        <end position="534"/>
    </location>
</feature>
<feature type="compositionally biased region" description="Basic residues" evidence="3">
    <location>
        <begin position="135"/>
        <end position="148"/>
    </location>
</feature>
<feature type="compositionally biased region" description="Basic and acidic residues" evidence="3">
    <location>
        <begin position="184"/>
        <end position="199"/>
    </location>
</feature>
<feature type="compositionally biased region" description="Basic residues" evidence="3">
    <location>
        <begin position="200"/>
        <end position="210"/>
    </location>
</feature>
<feature type="binding site" evidence="2">
    <location>
        <begin position="396"/>
        <end position="403"/>
    </location>
    <ligand>
        <name>GTP</name>
        <dbReference type="ChEBI" id="CHEBI:37565"/>
    </ligand>
</feature>
<feature type="binding site" evidence="2">
    <location>
        <begin position="442"/>
        <end position="446"/>
    </location>
    <ligand>
        <name>GTP</name>
        <dbReference type="ChEBI" id="CHEBI:37565"/>
    </ligand>
</feature>
<feature type="binding site" evidence="2">
    <location>
        <begin position="496"/>
        <end position="499"/>
    </location>
    <ligand>
        <name>GTP</name>
        <dbReference type="ChEBI" id="CHEBI:37565"/>
    </ligand>
</feature>
<reference key="1">
    <citation type="journal article" date="2007" name="PLoS ONE">
        <title>The complete genome sequence and analysis of the Epsilonproteobacterium Arcobacter butzleri.</title>
        <authorList>
            <person name="Miller W.G."/>
            <person name="Parker C.T."/>
            <person name="Rubenfield M."/>
            <person name="Mendz G.L."/>
            <person name="Woesten M.M.S.M."/>
            <person name="Ussery D.W."/>
            <person name="Stolz J.F."/>
            <person name="Binnewies T.T."/>
            <person name="Hallin P.F."/>
            <person name="Wang G."/>
            <person name="Malek J.A."/>
            <person name="Rogosin A."/>
            <person name="Stanker L.H."/>
            <person name="Mandrell R.E."/>
        </authorList>
    </citation>
    <scope>NUCLEOTIDE SEQUENCE [LARGE SCALE GENOMIC DNA]</scope>
    <source>
        <strain>RM4018</strain>
    </source>
</reference>
<keyword id="KW-0963">Cytoplasm</keyword>
<keyword id="KW-0342">GTP-binding</keyword>
<keyword id="KW-0396">Initiation factor</keyword>
<keyword id="KW-0547">Nucleotide-binding</keyword>
<keyword id="KW-0648">Protein biosynthesis</keyword>
<keyword id="KW-1185">Reference proteome</keyword>
<organism>
    <name type="scientific">Aliarcobacter butzleri (strain RM4018)</name>
    <name type="common">Arcobacter butzleri</name>
    <dbReference type="NCBI Taxonomy" id="367737"/>
    <lineage>
        <taxon>Bacteria</taxon>
        <taxon>Pseudomonadati</taxon>
        <taxon>Campylobacterota</taxon>
        <taxon>Epsilonproteobacteria</taxon>
        <taxon>Campylobacterales</taxon>
        <taxon>Arcobacteraceae</taxon>
        <taxon>Aliarcobacter</taxon>
    </lineage>
</organism>